<keyword id="KW-0963">Cytoplasm</keyword>
<keyword id="KW-0251">Elongation factor</keyword>
<keyword id="KW-0648">Protein biosynthesis</keyword>
<feature type="chain" id="PRO_1000189889" description="Elongation factor Ts">
    <location>
        <begin position="1"/>
        <end position="197"/>
    </location>
</feature>
<feature type="region of interest" description="Involved in Mg(2+) ion dislocation from EF-Tu" evidence="1">
    <location>
        <begin position="81"/>
        <end position="84"/>
    </location>
</feature>
<accession>B2V8E1</accession>
<gene>
    <name evidence="1" type="primary">tsf</name>
    <name type="ordered locus">SYO3AOP1_0576</name>
</gene>
<organism>
    <name type="scientific">Sulfurihydrogenibium sp. (strain YO3AOP1)</name>
    <dbReference type="NCBI Taxonomy" id="436114"/>
    <lineage>
        <taxon>Bacteria</taxon>
        <taxon>Pseudomonadati</taxon>
        <taxon>Aquificota</taxon>
        <taxon>Aquificia</taxon>
        <taxon>Aquificales</taxon>
        <taxon>Hydrogenothermaceae</taxon>
        <taxon>Sulfurihydrogenibium</taxon>
    </lineage>
</organism>
<comment type="function">
    <text evidence="1">Associates with the EF-Tu.GDP complex and induces the exchange of GDP to GTP. It remains bound to the aminoacyl-tRNA.EF-Tu.GTP complex up to the GTP hydrolysis stage on the ribosome.</text>
</comment>
<comment type="subcellular location">
    <subcellularLocation>
        <location evidence="1">Cytoplasm</location>
    </subcellularLocation>
</comment>
<comment type="similarity">
    <text evidence="1">Belongs to the EF-Ts family.</text>
</comment>
<evidence type="ECO:0000255" key="1">
    <source>
        <dbReference type="HAMAP-Rule" id="MF_00050"/>
    </source>
</evidence>
<proteinExistence type="inferred from homology"/>
<dbReference type="EMBL" id="CP001080">
    <property type="protein sequence ID" value="ACD66214.1"/>
    <property type="molecule type" value="Genomic_DNA"/>
</dbReference>
<dbReference type="RefSeq" id="WP_012459294.1">
    <property type="nucleotide sequence ID" value="NC_010730.1"/>
</dbReference>
<dbReference type="SMR" id="B2V8E1"/>
<dbReference type="STRING" id="436114.SYO3AOP1_0576"/>
<dbReference type="KEGG" id="sul:SYO3AOP1_0576"/>
<dbReference type="eggNOG" id="COG0264">
    <property type="taxonomic scope" value="Bacteria"/>
</dbReference>
<dbReference type="HOGENOM" id="CLU_047155_1_1_0"/>
<dbReference type="GO" id="GO:0005737">
    <property type="term" value="C:cytoplasm"/>
    <property type="evidence" value="ECO:0007669"/>
    <property type="project" value="UniProtKB-SubCell"/>
</dbReference>
<dbReference type="GO" id="GO:0003746">
    <property type="term" value="F:translation elongation factor activity"/>
    <property type="evidence" value="ECO:0007669"/>
    <property type="project" value="UniProtKB-UniRule"/>
</dbReference>
<dbReference type="CDD" id="cd14275">
    <property type="entry name" value="UBA_EF-Ts"/>
    <property type="match status" value="1"/>
</dbReference>
<dbReference type="FunFam" id="1.10.286.20:FF:000001">
    <property type="entry name" value="Elongation factor Ts"/>
    <property type="match status" value="1"/>
</dbReference>
<dbReference type="FunFam" id="1.10.8.10:FF:000001">
    <property type="entry name" value="Elongation factor Ts"/>
    <property type="match status" value="1"/>
</dbReference>
<dbReference type="Gene3D" id="1.10.286.20">
    <property type="match status" value="1"/>
</dbReference>
<dbReference type="Gene3D" id="1.10.8.10">
    <property type="entry name" value="DNA helicase RuvA subunit, C-terminal domain"/>
    <property type="match status" value="1"/>
</dbReference>
<dbReference type="Gene3D" id="3.30.479.20">
    <property type="entry name" value="Elongation factor Ts, dimerisation domain"/>
    <property type="match status" value="1"/>
</dbReference>
<dbReference type="HAMAP" id="MF_00050">
    <property type="entry name" value="EF_Ts"/>
    <property type="match status" value="1"/>
</dbReference>
<dbReference type="InterPro" id="IPR036402">
    <property type="entry name" value="EF-Ts_dimer_sf"/>
</dbReference>
<dbReference type="InterPro" id="IPR001816">
    <property type="entry name" value="Transl_elong_EFTs/EF1B"/>
</dbReference>
<dbReference type="InterPro" id="IPR014039">
    <property type="entry name" value="Transl_elong_EFTs/EF1B_dimer"/>
</dbReference>
<dbReference type="InterPro" id="IPR018101">
    <property type="entry name" value="Transl_elong_Ts_CS"/>
</dbReference>
<dbReference type="InterPro" id="IPR009060">
    <property type="entry name" value="UBA-like_sf"/>
</dbReference>
<dbReference type="NCBIfam" id="TIGR00116">
    <property type="entry name" value="tsf"/>
    <property type="match status" value="2"/>
</dbReference>
<dbReference type="PANTHER" id="PTHR11741">
    <property type="entry name" value="ELONGATION FACTOR TS"/>
    <property type="match status" value="1"/>
</dbReference>
<dbReference type="PANTHER" id="PTHR11741:SF0">
    <property type="entry name" value="ELONGATION FACTOR TS, MITOCHONDRIAL"/>
    <property type="match status" value="1"/>
</dbReference>
<dbReference type="Pfam" id="PF00889">
    <property type="entry name" value="EF_TS"/>
    <property type="match status" value="1"/>
</dbReference>
<dbReference type="SUPFAM" id="SSF54713">
    <property type="entry name" value="Elongation factor Ts (EF-Ts), dimerisation domain"/>
    <property type="match status" value="1"/>
</dbReference>
<dbReference type="SUPFAM" id="SSF46934">
    <property type="entry name" value="UBA-like"/>
    <property type="match status" value="1"/>
</dbReference>
<dbReference type="PROSITE" id="PS01126">
    <property type="entry name" value="EF_TS_1"/>
    <property type="match status" value="1"/>
</dbReference>
<dbReference type="PROSITE" id="PS01127">
    <property type="entry name" value="EF_TS_2"/>
    <property type="match status" value="1"/>
</dbReference>
<name>EFTS_SULSY</name>
<reference key="1">
    <citation type="journal article" date="2009" name="J. Bacteriol.">
        <title>Complete and draft genome sequences of six members of the Aquificales.</title>
        <authorList>
            <person name="Reysenbach A.-L."/>
            <person name="Hamamura N."/>
            <person name="Podar M."/>
            <person name="Griffiths E."/>
            <person name="Ferreira S."/>
            <person name="Hochstein R."/>
            <person name="Heidelberg J."/>
            <person name="Johnson J."/>
            <person name="Mead D."/>
            <person name="Pohorille A."/>
            <person name="Sarmiento M."/>
            <person name="Schweighofer K."/>
            <person name="Seshadri R."/>
            <person name="Voytek M.A."/>
        </authorList>
    </citation>
    <scope>NUCLEOTIDE SEQUENCE [LARGE SCALE GENOMIC DNA]</scope>
    <source>
        <strain>YO3AOP1</strain>
    </source>
</reference>
<protein>
    <recommendedName>
        <fullName evidence="1">Elongation factor Ts</fullName>
        <shortName evidence="1">EF-Ts</shortName>
    </recommendedName>
</protein>
<sequence>MAVDAKLVKTLREMTGAGMLECKSALEEANGDLELAVEILRKKGVAKAAKKAGRETKEGLIHAYIHAGGRIGVLLELNCETDFVARNELFKELANEIALQIAAMKPQYVKREDVPREVVEKEGEIAREAAVAEGKPAHIAEKIAEGKLEKFYKEVCLYEQPYIKDDKKTIEELVKEYIAKIGENIQVRRFCRYELGE</sequence>